<name>TSAD_NITHX</name>
<reference key="1">
    <citation type="submission" date="2006-03" db="EMBL/GenBank/DDBJ databases">
        <title>Complete sequence of chromosome of Nitrobacter hamburgensis X14.</title>
        <authorList>
            <consortium name="US DOE Joint Genome Institute"/>
            <person name="Copeland A."/>
            <person name="Lucas S."/>
            <person name="Lapidus A."/>
            <person name="Barry K."/>
            <person name="Detter J.C."/>
            <person name="Glavina del Rio T."/>
            <person name="Hammon N."/>
            <person name="Israni S."/>
            <person name="Dalin E."/>
            <person name="Tice H."/>
            <person name="Pitluck S."/>
            <person name="Chain P."/>
            <person name="Malfatti S."/>
            <person name="Shin M."/>
            <person name="Vergez L."/>
            <person name="Schmutz J."/>
            <person name="Larimer F."/>
            <person name="Land M."/>
            <person name="Hauser L."/>
            <person name="Kyrpides N."/>
            <person name="Ivanova N."/>
            <person name="Ward B."/>
            <person name="Arp D."/>
            <person name="Klotz M."/>
            <person name="Stein L."/>
            <person name="O'Mullan G."/>
            <person name="Starkenburg S."/>
            <person name="Sayavedra L."/>
            <person name="Poret-Peterson A.T."/>
            <person name="Gentry M.E."/>
            <person name="Bruce D."/>
            <person name="Richardson P."/>
        </authorList>
    </citation>
    <scope>NUCLEOTIDE SEQUENCE [LARGE SCALE GENOMIC DNA]</scope>
    <source>
        <strain>DSM 10229 / NCIMB 13809 / X14</strain>
    </source>
</reference>
<evidence type="ECO:0000255" key="1">
    <source>
        <dbReference type="HAMAP-Rule" id="MF_01445"/>
    </source>
</evidence>
<keyword id="KW-0012">Acyltransferase</keyword>
<keyword id="KW-0963">Cytoplasm</keyword>
<keyword id="KW-0408">Iron</keyword>
<keyword id="KW-0479">Metal-binding</keyword>
<keyword id="KW-1185">Reference proteome</keyword>
<keyword id="KW-0808">Transferase</keyword>
<keyword id="KW-0819">tRNA processing</keyword>
<comment type="function">
    <text evidence="1">Required for the formation of a threonylcarbamoyl group on adenosine at position 37 (t(6)A37) in tRNAs that read codons beginning with adenine. Is involved in the transfer of the threonylcarbamoyl moiety of threonylcarbamoyl-AMP (TC-AMP) to the N6 group of A37, together with TsaE and TsaB. TsaD likely plays a direct catalytic role in this reaction.</text>
</comment>
<comment type="catalytic activity">
    <reaction evidence="1">
        <text>L-threonylcarbamoyladenylate + adenosine(37) in tRNA = N(6)-L-threonylcarbamoyladenosine(37) in tRNA + AMP + H(+)</text>
        <dbReference type="Rhea" id="RHEA:37059"/>
        <dbReference type="Rhea" id="RHEA-COMP:10162"/>
        <dbReference type="Rhea" id="RHEA-COMP:10163"/>
        <dbReference type="ChEBI" id="CHEBI:15378"/>
        <dbReference type="ChEBI" id="CHEBI:73682"/>
        <dbReference type="ChEBI" id="CHEBI:74411"/>
        <dbReference type="ChEBI" id="CHEBI:74418"/>
        <dbReference type="ChEBI" id="CHEBI:456215"/>
        <dbReference type="EC" id="2.3.1.234"/>
    </reaction>
</comment>
<comment type="cofactor">
    <cofactor evidence="1">
        <name>Fe(2+)</name>
        <dbReference type="ChEBI" id="CHEBI:29033"/>
    </cofactor>
    <text evidence="1">Binds 1 Fe(2+) ion per subunit.</text>
</comment>
<comment type="subcellular location">
    <subcellularLocation>
        <location evidence="1">Cytoplasm</location>
    </subcellularLocation>
</comment>
<comment type="similarity">
    <text evidence="1">Belongs to the KAE1 / TsaD family.</text>
</comment>
<sequence length="357" mass="36878">MLVLGIETTCDETAAAVVERHADGSALILSNIVRSQTGEHAPYGGVVPEIAARAHVDMLDGIIASAMKQSGVGFPRLSGVAAAAGPGLIGGVIVGLTTAKAIALVHRTPLIAVNHLEAHALTPRLTSALEFPYCLFLASGGHTQIVAVLGVGNYVRLGTTVDDAMGEAFDKVAKMLGLPYPGGPQVERAAADGDAKRFNFPRPMLGRPDANFSLSGLKTAVRNEAGRIDPLRPRDINDLCAGFQAAVLEATADRLGVGLELFRERFGTPRALVAAGGVAANQAIRGALEGVAARAQTMLIIPPPALCTDNGAMIAWAGAERLAAGLTDTLEAPPRARWLLDANAHAPAGFANTRAGF</sequence>
<proteinExistence type="inferred from homology"/>
<organism>
    <name type="scientific">Nitrobacter hamburgensis (strain DSM 10229 / NCIMB 13809 / X14)</name>
    <dbReference type="NCBI Taxonomy" id="323097"/>
    <lineage>
        <taxon>Bacteria</taxon>
        <taxon>Pseudomonadati</taxon>
        <taxon>Pseudomonadota</taxon>
        <taxon>Alphaproteobacteria</taxon>
        <taxon>Hyphomicrobiales</taxon>
        <taxon>Nitrobacteraceae</taxon>
        <taxon>Nitrobacter</taxon>
    </lineage>
</organism>
<accession>Q1QQP6</accession>
<gene>
    <name evidence="1" type="primary">tsaD</name>
    <name type="synonym">gcp</name>
    <name type="ordered locus">Nham_0561</name>
</gene>
<protein>
    <recommendedName>
        <fullName evidence="1">tRNA N6-adenosine threonylcarbamoyltransferase</fullName>
        <ecNumber evidence="1">2.3.1.234</ecNumber>
    </recommendedName>
    <alternativeName>
        <fullName evidence="1">N6-L-threonylcarbamoyladenine synthase</fullName>
        <shortName evidence="1">t(6)A synthase</shortName>
    </alternativeName>
    <alternativeName>
        <fullName evidence="1">t(6)A37 threonylcarbamoyladenosine biosynthesis protein TsaD</fullName>
    </alternativeName>
    <alternativeName>
        <fullName evidence="1">tRNA threonylcarbamoyladenosine biosynthesis protein TsaD</fullName>
    </alternativeName>
</protein>
<dbReference type="EC" id="2.3.1.234" evidence="1"/>
<dbReference type="EMBL" id="CP000319">
    <property type="protein sequence ID" value="ABE61451.1"/>
    <property type="molecule type" value="Genomic_DNA"/>
</dbReference>
<dbReference type="RefSeq" id="WP_011509155.1">
    <property type="nucleotide sequence ID" value="NC_007964.1"/>
</dbReference>
<dbReference type="SMR" id="Q1QQP6"/>
<dbReference type="STRING" id="323097.Nham_0561"/>
<dbReference type="KEGG" id="nha:Nham_0561"/>
<dbReference type="eggNOG" id="COG0533">
    <property type="taxonomic scope" value="Bacteria"/>
</dbReference>
<dbReference type="HOGENOM" id="CLU_023208_0_2_5"/>
<dbReference type="OrthoDB" id="9806197at2"/>
<dbReference type="Proteomes" id="UP000001953">
    <property type="component" value="Chromosome"/>
</dbReference>
<dbReference type="GO" id="GO:0005737">
    <property type="term" value="C:cytoplasm"/>
    <property type="evidence" value="ECO:0007669"/>
    <property type="project" value="UniProtKB-SubCell"/>
</dbReference>
<dbReference type="GO" id="GO:0005506">
    <property type="term" value="F:iron ion binding"/>
    <property type="evidence" value="ECO:0007669"/>
    <property type="project" value="UniProtKB-UniRule"/>
</dbReference>
<dbReference type="GO" id="GO:0061711">
    <property type="term" value="F:N(6)-L-threonylcarbamoyladenine synthase activity"/>
    <property type="evidence" value="ECO:0007669"/>
    <property type="project" value="UniProtKB-EC"/>
</dbReference>
<dbReference type="GO" id="GO:0002949">
    <property type="term" value="P:tRNA threonylcarbamoyladenosine modification"/>
    <property type="evidence" value="ECO:0007669"/>
    <property type="project" value="UniProtKB-UniRule"/>
</dbReference>
<dbReference type="FunFam" id="3.30.420.40:FF:000012">
    <property type="entry name" value="tRNA N6-adenosine threonylcarbamoyltransferase"/>
    <property type="match status" value="1"/>
</dbReference>
<dbReference type="Gene3D" id="3.30.420.40">
    <property type="match status" value="2"/>
</dbReference>
<dbReference type="HAMAP" id="MF_01445">
    <property type="entry name" value="TsaD"/>
    <property type="match status" value="1"/>
</dbReference>
<dbReference type="InterPro" id="IPR043129">
    <property type="entry name" value="ATPase_NBD"/>
</dbReference>
<dbReference type="InterPro" id="IPR000905">
    <property type="entry name" value="Gcp-like_dom"/>
</dbReference>
<dbReference type="InterPro" id="IPR017861">
    <property type="entry name" value="KAE1/TsaD"/>
</dbReference>
<dbReference type="InterPro" id="IPR017860">
    <property type="entry name" value="Peptidase_M22_CS"/>
</dbReference>
<dbReference type="InterPro" id="IPR022450">
    <property type="entry name" value="TsaD"/>
</dbReference>
<dbReference type="NCBIfam" id="TIGR00329">
    <property type="entry name" value="gcp_kae1"/>
    <property type="match status" value="1"/>
</dbReference>
<dbReference type="NCBIfam" id="TIGR03723">
    <property type="entry name" value="T6A_TsaD_YgjD"/>
    <property type="match status" value="1"/>
</dbReference>
<dbReference type="PANTHER" id="PTHR11735">
    <property type="entry name" value="TRNA N6-ADENOSINE THREONYLCARBAMOYLTRANSFERASE"/>
    <property type="match status" value="1"/>
</dbReference>
<dbReference type="PANTHER" id="PTHR11735:SF6">
    <property type="entry name" value="TRNA N6-ADENOSINE THREONYLCARBAMOYLTRANSFERASE, MITOCHONDRIAL"/>
    <property type="match status" value="1"/>
</dbReference>
<dbReference type="Pfam" id="PF00814">
    <property type="entry name" value="TsaD"/>
    <property type="match status" value="1"/>
</dbReference>
<dbReference type="PRINTS" id="PR00789">
    <property type="entry name" value="OSIALOPTASE"/>
</dbReference>
<dbReference type="SUPFAM" id="SSF53067">
    <property type="entry name" value="Actin-like ATPase domain"/>
    <property type="match status" value="2"/>
</dbReference>
<dbReference type="PROSITE" id="PS01016">
    <property type="entry name" value="GLYCOPROTEASE"/>
    <property type="match status" value="1"/>
</dbReference>
<feature type="chain" id="PRO_0000303453" description="tRNA N6-adenosine threonylcarbamoyltransferase">
    <location>
        <begin position="1"/>
        <end position="357"/>
    </location>
</feature>
<feature type="binding site" evidence="1">
    <location>
        <position position="115"/>
    </location>
    <ligand>
        <name>Fe cation</name>
        <dbReference type="ChEBI" id="CHEBI:24875"/>
    </ligand>
</feature>
<feature type="binding site" evidence="1">
    <location>
        <position position="119"/>
    </location>
    <ligand>
        <name>Fe cation</name>
        <dbReference type="ChEBI" id="CHEBI:24875"/>
    </ligand>
</feature>
<feature type="binding site" evidence="1">
    <location>
        <begin position="137"/>
        <end position="141"/>
    </location>
    <ligand>
        <name>substrate</name>
    </ligand>
</feature>
<feature type="binding site" evidence="1">
    <location>
        <position position="170"/>
    </location>
    <ligand>
        <name>substrate</name>
    </ligand>
</feature>
<feature type="binding site" evidence="1">
    <location>
        <position position="183"/>
    </location>
    <ligand>
        <name>substrate</name>
    </ligand>
</feature>
<feature type="binding site" evidence="1">
    <location>
        <position position="281"/>
    </location>
    <ligand>
        <name>substrate</name>
    </ligand>
</feature>
<feature type="binding site" evidence="1">
    <location>
        <position position="309"/>
    </location>
    <ligand>
        <name>Fe cation</name>
        <dbReference type="ChEBI" id="CHEBI:24875"/>
    </ligand>
</feature>